<evidence type="ECO:0000255" key="1">
    <source>
        <dbReference type="HAMAP-Rule" id="MF_00211"/>
    </source>
</evidence>
<gene>
    <name evidence="1" type="primary">trpD</name>
    <name type="ordered locus">Cthe_0873</name>
</gene>
<name>TRPD_ACET2</name>
<comment type="function">
    <text evidence="1">Catalyzes the transfer of the phosphoribosyl group of 5-phosphorylribose-1-pyrophosphate (PRPP) to anthranilate to yield N-(5'-phosphoribosyl)-anthranilate (PRA).</text>
</comment>
<comment type="catalytic activity">
    <reaction evidence="1">
        <text>N-(5-phospho-beta-D-ribosyl)anthranilate + diphosphate = 5-phospho-alpha-D-ribose 1-diphosphate + anthranilate</text>
        <dbReference type="Rhea" id="RHEA:11768"/>
        <dbReference type="ChEBI" id="CHEBI:16567"/>
        <dbReference type="ChEBI" id="CHEBI:18277"/>
        <dbReference type="ChEBI" id="CHEBI:33019"/>
        <dbReference type="ChEBI" id="CHEBI:58017"/>
        <dbReference type="EC" id="2.4.2.18"/>
    </reaction>
</comment>
<comment type="cofactor">
    <cofactor evidence="1">
        <name>Mg(2+)</name>
        <dbReference type="ChEBI" id="CHEBI:18420"/>
    </cofactor>
    <text evidence="1">Binds 2 magnesium ions per monomer.</text>
</comment>
<comment type="pathway">
    <text evidence="1">Amino-acid biosynthesis; L-tryptophan biosynthesis; L-tryptophan from chorismate: step 2/5.</text>
</comment>
<comment type="subunit">
    <text evidence="1">Homodimer.</text>
</comment>
<comment type="similarity">
    <text evidence="1">Belongs to the anthranilate phosphoribosyltransferase family.</text>
</comment>
<sequence>MLKKAISKLVEGKNLSESEIIEALDCIMEGKATPAQIGSFITALRIKGETIEEITGCAKVMRAKADKICPNVDYYIDTCGTGGDGTNTFNISTATAFVAAAGGVYVAKHGNRSVSSKSGSADVLEALGVNIDLDPVQVKECIEKVGIGFIYAPVFHKSMKHAAGPRKELGIRTIFNILGPLTNPSNAKGQVLGVFNPNLTELMANVLLNLGIERAMVIHGMDGMDEITTTTSTKVSEVRNNEVITYELFPENYGIALASPEDLTGGNAEENAQIIRRIFNGEKGPKRDIVVLNSAAALYVGKVVSSIEEGIGLAEEVIDSGKALQKLDEFVEFTNSFISYNEMSG</sequence>
<feature type="chain" id="PRO_1000043007" description="Anthranilate phosphoribosyltransferase">
    <location>
        <begin position="1"/>
        <end position="345"/>
    </location>
</feature>
<feature type="binding site" evidence="1">
    <location>
        <position position="80"/>
    </location>
    <ligand>
        <name>5-phospho-alpha-D-ribose 1-diphosphate</name>
        <dbReference type="ChEBI" id="CHEBI:58017"/>
    </ligand>
</feature>
<feature type="binding site" evidence="1">
    <location>
        <position position="80"/>
    </location>
    <ligand>
        <name>anthranilate</name>
        <dbReference type="ChEBI" id="CHEBI:16567"/>
        <label>1</label>
    </ligand>
</feature>
<feature type="binding site" evidence="1">
    <location>
        <begin position="83"/>
        <end position="84"/>
    </location>
    <ligand>
        <name>5-phospho-alpha-D-ribose 1-diphosphate</name>
        <dbReference type="ChEBI" id="CHEBI:58017"/>
    </ligand>
</feature>
<feature type="binding site" evidence="1">
    <location>
        <position position="88"/>
    </location>
    <ligand>
        <name>5-phospho-alpha-D-ribose 1-diphosphate</name>
        <dbReference type="ChEBI" id="CHEBI:58017"/>
    </ligand>
</feature>
<feature type="binding site" evidence="1">
    <location>
        <begin position="90"/>
        <end position="93"/>
    </location>
    <ligand>
        <name>5-phospho-alpha-D-ribose 1-diphosphate</name>
        <dbReference type="ChEBI" id="CHEBI:58017"/>
    </ligand>
</feature>
<feature type="binding site" evidence="1">
    <location>
        <position position="92"/>
    </location>
    <ligand>
        <name>Mg(2+)</name>
        <dbReference type="ChEBI" id="CHEBI:18420"/>
        <label>1</label>
    </ligand>
</feature>
<feature type="binding site" evidence="1">
    <location>
        <begin position="108"/>
        <end position="116"/>
    </location>
    <ligand>
        <name>5-phospho-alpha-D-ribose 1-diphosphate</name>
        <dbReference type="ChEBI" id="CHEBI:58017"/>
    </ligand>
</feature>
<feature type="binding site" evidence="1">
    <location>
        <position position="111"/>
    </location>
    <ligand>
        <name>anthranilate</name>
        <dbReference type="ChEBI" id="CHEBI:16567"/>
        <label>1</label>
    </ligand>
</feature>
<feature type="binding site" evidence="1">
    <location>
        <position position="120"/>
    </location>
    <ligand>
        <name>5-phospho-alpha-D-ribose 1-diphosphate</name>
        <dbReference type="ChEBI" id="CHEBI:58017"/>
    </ligand>
</feature>
<feature type="binding site" evidence="1">
    <location>
        <position position="166"/>
    </location>
    <ligand>
        <name>anthranilate</name>
        <dbReference type="ChEBI" id="CHEBI:16567"/>
        <label>2</label>
    </ligand>
</feature>
<feature type="binding site" evidence="1">
    <location>
        <position position="225"/>
    </location>
    <ligand>
        <name>Mg(2+)</name>
        <dbReference type="ChEBI" id="CHEBI:18420"/>
        <label>2</label>
    </ligand>
</feature>
<feature type="binding site" evidence="1">
    <location>
        <position position="226"/>
    </location>
    <ligand>
        <name>Mg(2+)</name>
        <dbReference type="ChEBI" id="CHEBI:18420"/>
        <label>1</label>
    </ligand>
</feature>
<feature type="binding site" evidence="1">
    <location>
        <position position="226"/>
    </location>
    <ligand>
        <name>Mg(2+)</name>
        <dbReference type="ChEBI" id="CHEBI:18420"/>
        <label>2</label>
    </ligand>
</feature>
<organism>
    <name type="scientific">Acetivibrio thermocellus (strain ATCC 27405 / DSM 1237 / JCM 9322 / NBRC 103400 / NCIMB 10682 / NRRL B-4536 / VPI 7372)</name>
    <name type="common">Clostridium thermocellum</name>
    <dbReference type="NCBI Taxonomy" id="203119"/>
    <lineage>
        <taxon>Bacteria</taxon>
        <taxon>Bacillati</taxon>
        <taxon>Bacillota</taxon>
        <taxon>Clostridia</taxon>
        <taxon>Eubacteriales</taxon>
        <taxon>Oscillospiraceae</taxon>
        <taxon>Acetivibrio</taxon>
    </lineage>
</organism>
<dbReference type="EC" id="2.4.2.18" evidence="1"/>
<dbReference type="EMBL" id="CP000568">
    <property type="protein sequence ID" value="ABN52107.1"/>
    <property type="molecule type" value="Genomic_DNA"/>
</dbReference>
<dbReference type="RefSeq" id="WP_003517204.1">
    <property type="nucleotide sequence ID" value="NC_009012.1"/>
</dbReference>
<dbReference type="SMR" id="A3DDS8"/>
<dbReference type="STRING" id="203119.Cthe_0873"/>
<dbReference type="GeneID" id="35803133"/>
<dbReference type="KEGG" id="cth:Cthe_0873"/>
<dbReference type="eggNOG" id="COG0547">
    <property type="taxonomic scope" value="Bacteria"/>
</dbReference>
<dbReference type="HOGENOM" id="CLU_034315_2_1_9"/>
<dbReference type="OrthoDB" id="9806430at2"/>
<dbReference type="UniPathway" id="UPA00035">
    <property type="reaction ID" value="UER00041"/>
</dbReference>
<dbReference type="Proteomes" id="UP000002145">
    <property type="component" value="Chromosome"/>
</dbReference>
<dbReference type="GO" id="GO:0005829">
    <property type="term" value="C:cytosol"/>
    <property type="evidence" value="ECO:0007669"/>
    <property type="project" value="TreeGrafter"/>
</dbReference>
<dbReference type="GO" id="GO:0004048">
    <property type="term" value="F:anthranilate phosphoribosyltransferase activity"/>
    <property type="evidence" value="ECO:0007669"/>
    <property type="project" value="UniProtKB-UniRule"/>
</dbReference>
<dbReference type="GO" id="GO:0000287">
    <property type="term" value="F:magnesium ion binding"/>
    <property type="evidence" value="ECO:0007669"/>
    <property type="project" value="UniProtKB-UniRule"/>
</dbReference>
<dbReference type="GO" id="GO:0000162">
    <property type="term" value="P:L-tryptophan biosynthetic process"/>
    <property type="evidence" value="ECO:0007669"/>
    <property type="project" value="UniProtKB-UniRule"/>
</dbReference>
<dbReference type="FunFam" id="3.40.1030.10:FF:000002">
    <property type="entry name" value="Anthranilate phosphoribosyltransferase"/>
    <property type="match status" value="1"/>
</dbReference>
<dbReference type="Gene3D" id="3.40.1030.10">
    <property type="entry name" value="Nucleoside phosphorylase/phosphoribosyltransferase catalytic domain"/>
    <property type="match status" value="1"/>
</dbReference>
<dbReference type="Gene3D" id="1.20.970.10">
    <property type="entry name" value="Transferase, Pyrimidine Nucleoside Phosphorylase, Chain C"/>
    <property type="match status" value="1"/>
</dbReference>
<dbReference type="HAMAP" id="MF_00211">
    <property type="entry name" value="TrpD"/>
    <property type="match status" value="1"/>
</dbReference>
<dbReference type="InterPro" id="IPR005940">
    <property type="entry name" value="Anthranilate_Pribosyl_Tfrase"/>
</dbReference>
<dbReference type="InterPro" id="IPR000312">
    <property type="entry name" value="Glycosyl_Trfase_fam3"/>
</dbReference>
<dbReference type="InterPro" id="IPR017459">
    <property type="entry name" value="Glycosyl_Trfase_fam3_N_dom"/>
</dbReference>
<dbReference type="InterPro" id="IPR036320">
    <property type="entry name" value="Glycosyl_Trfase_fam3_N_dom_sf"/>
</dbReference>
<dbReference type="InterPro" id="IPR035902">
    <property type="entry name" value="Nuc_phospho_transferase"/>
</dbReference>
<dbReference type="NCBIfam" id="TIGR01245">
    <property type="entry name" value="trpD"/>
    <property type="match status" value="1"/>
</dbReference>
<dbReference type="PANTHER" id="PTHR43285">
    <property type="entry name" value="ANTHRANILATE PHOSPHORIBOSYLTRANSFERASE"/>
    <property type="match status" value="1"/>
</dbReference>
<dbReference type="PANTHER" id="PTHR43285:SF2">
    <property type="entry name" value="ANTHRANILATE PHOSPHORIBOSYLTRANSFERASE"/>
    <property type="match status" value="1"/>
</dbReference>
<dbReference type="Pfam" id="PF02885">
    <property type="entry name" value="Glycos_trans_3N"/>
    <property type="match status" value="1"/>
</dbReference>
<dbReference type="Pfam" id="PF00591">
    <property type="entry name" value="Glycos_transf_3"/>
    <property type="match status" value="1"/>
</dbReference>
<dbReference type="SUPFAM" id="SSF52418">
    <property type="entry name" value="Nucleoside phosphorylase/phosphoribosyltransferase catalytic domain"/>
    <property type="match status" value="1"/>
</dbReference>
<dbReference type="SUPFAM" id="SSF47648">
    <property type="entry name" value="Nucleoside phosphorylase/phosphoribosyltransferase N-terminal domain"/>
    <property type="match status" value="1"/>
</dbReference>
<accession>A3DDS8</accession>
<protein>
    <recommendedName>
        <fullName evidence="1">Anthranilate phosphoribosyltransferase</fullName>
        <ecNumber evidence="1">2.4.2.18</ecNumber>
    </recommendedName>
</protein>
<proteinExistence type="inferred from homology"/>
<keyword id="KW-0028">Amino-acid biosynthesis</keyword>
<keyword id="KW-0057">Aromatic amino acid biosynthesis</keyword>
<keyword id="KW-0328">Glycosyltransferase</keyword>
<keyword id="KW-0460">Magnesium</keyword>
<keyword id="KW-0479">Metal-binding</keyword>
<keyword id="KW-1185">Reference proteome</keyword>
<keyword id="KW-0808">Transferase</keyword>
<keyword id="KW-0822">Tryptophan biosynthesis</keyword>
<reference key="1">
    <citation type="submission" date="2007-02" db="EMBL/GenBank/DDBJ databases">
        <title>Complete sequence of Clostridium thermocellum ATCC 27405.</title>
        <authorList>
            <consortium name="US DOE Joint Genome Institute"/>
            <person name="Copeland A."/>
            <person name="Lucas S."/>
            <person name="Lapidus A."/>
            <person name="Barry K."/>
            <person name="Detter J.C."/>
            <person name="Glavina del Rio T."/>
            <person name="Hammon N."/>
            <person name="Israni S."/>
            <person name="Dalin E."/>
            <person name="Tice H."/>
            <person name="Pitluck S."/>
            <person name="Chertkov O."/>
            <person name="Brettin T."/>
            <person name="Bruce D."/>
            <person name="Han C."/>
            <person name="Tapia R."/>
            <person name="Gilna P."/>
            <person name="Schmutz J."/>
            <person name="Larimer F."/>
            <person name="Land M."/>
            <person name="Hauser L."/>
            <person name="Kyrpides N."/>
            <person name="Mikhailova N."/>
            <person name="Wu J.H.D."/>
            <person name="Newcomb M."/>
            <person name="Richardson P."/>
        </authorList>
    </citation>
    <scope>NUCLEOTIDE SEQUENCE [LARGE SCALE GENOMIC DNA]</scope>
    <source>
        <strain>ATCC 27405 / DSM 1237 / JCM 9322 / NBRC 103400 / NCIMB 10682 / NRRL B-4536 / VPI 7372</strain>
    </source>
</reference>